<feature type="chain" id="PRO_1000061920" description="Phosphatidylserine decarboxylase beta chain" evidence="1">
    <location>
        <begin position="1"/>
        <end position="253"/>
    </location>
</feature>
<feature type="chain" id="PRO_1000061921" description="Phosphatidylserine decarboxylase alpha chain" evidence="1">
    <location>
        <begin position="254"/>
        <end position="322"/>
    </location>
</feature>
<feature type="region of interest" description="Disordered" evidence="2">
    <location>
        <begin position="293"/>
        <end position="322"/>
    </location>
</feature>
<feature type="compositionally biased region" description="Basic and acidic residues" evidence="2">
    <location>
        <begin position="308"/>
        <end position="322"/>
    </location>
</feature>
<feature type="active site" description="Charge relay system; for autoendoproteolytic cleavage activity" evidence="1">
    <location>
        <position position="90"/>
    </location>
</feature>
<feature type="active site" description="Charge relay system; for autoendoproteolytic cleavage activity" evidence="1">
    <location>
        <position position="147"/>
    </location>
</feature>
<feature type="active site" description="Charge relay system; for autoendoproteolytic cleavage activity" evidence="1">
    <location>
        <position position="254"/>
    </location>
</feature>
<feature type="active site" description="Schiff-base intermediate with substrate; via pyruvic acid; for decarboxylase activity" evidence="1">
    <location>
        <position position="254"/>
    </location>
</feature>
<feature type="site" description="Cleavage (non-hydrolytic); by autocatalysis" evidence="1">
    <location>
        <begin position="253"/>
        <end position="254"/>
    </location>
</feature>
<feature type="modified residue" description="Pyruvic acid (Ser); by autocatalysis" evidence="1">
    <location>
        <position position="254"/>
    </location>
</feature>
<sequence length="322" mass="35934">MLNSFKLSLQYILPKLWLTRLAGWGASKRAGWLTKLVIDLFVKYYKVDMKEAQKPDTASYRTFNEFFVRPLRDEVRPIDTDPNVLVMPADGVISQLGKIEEDKILQAKGHNYSLEALLAGNYLMADLFRNGTFVTTYLSPRDYHRVHMPCNGILREMIYVPGDLFSVNHLTAQNVPNLFARNERVICLFDTEFGPMAQILVGATIVGSIETVWAGTITPPREGIIKRWTWPAGENDGSVALLKGQEMGRFKLGSTVINLFAPGKVNLVEQLESLSVTKIGQPLAVSTETFVTPDAEPAPLPAEEIEAEHDASPLVDDKKDQV</sequence>
<keyword id="KW-1003">Cell membrane</keyword>
<keyword id="KW-0210">Decarboxylase</keyword>
<keyword id="KW-0444">Lipid biosynthesis</keyword>
<keyword id="KW-0443">Lipid metabolism</keyword>
<keyword id="KW-0456">Lyase</keyword>
<keyword id="KW-0472">Membrane</keyword>
<keyword id="KW-0594">Phospholipid biosynthesis</keyword>
<keyword id="KW-1208">Phospholipid metabolism</keyword>
<keyword id="KW-0670">Pyruvate</keyword>
<keyword id="KW-1185">Reference proteome</keyword>
<keyword id="KW-0865">Zymogen</keyword>
<evidence type="ECO:0000255" key="1">
    <source>
        <dbReference type="HAMAP-Rule" id="MF_00662"/>
    </source>
</evidence>
<evidence type="ECO:0000256" key="2">
    <source>
        <dbReference type="SAM" id="MobiDB-lite"/>
    </source>
</evidence>
<gene>
    <name evidence="1" type="primary">psd</name>
    <name type="ordered locus">EcE24377A_4717</name>
</gene>
<protein>
    <recommendedName>
        <fullName evidence="1">Phosphatidylserine decarboxylase proenzyme</fullName>
        <ecNumber evidence="1">4.1.1.65</ecNumber>
    </recommendedName>
    <component>
        <recommendedName>
            <fullName evidence="1">Phosphatidylserine decarboxylase alpha chain</fullName>
        </recommendedName>
    </component>
    <component>
        <recommendedName>
            <fullName evidence="1">Phosphatidylserine decarboxylase beta chain</fullName>
        </recommendedName>
    </component>
</protein>
<proteinExistence type="inferred from homology"/>
<comment type="function">
    <text evidence="1">Catalyzes the formation of phosphatidylethanolamine (PtdEtn) from phosphatidylserine (PtdSer).</text>
</comment>
<comment type="catalytic activity">
    <reaction evidence="1">
        <text>a 1,2-diacyl-sn-glycero-3-phospho-L-serine + H(+) = a 1,2-diacyl-sn-glycero-3-phosphoethanolamine + CO2</text>
        <dbReference type="Rhea" id="RHEA:20828"/>
        <dbReference type="ChEBI" id="CHEBI:15378"/>
        <dbReference type="ChEBI" id="CHEBI:16526"/>
        <dbReference type="ChEBI" id="CHEBI:57262"/>
        <dbReference type="ChEBI" id="CHEBI:64612"/>
        <dbReference type="EC" id="4.1.1.65"/>
    </reaction>
</comment>
<comment type="cofactor">
    <cofactor evidence="1">
        <name>pyruvate</name>
        <dbReference type="ChEBI" id="CHEBI:15361"/>
    </cofactor>
    <text evidence="1">Binds 1 pyruvoyl group covalently per subunit.</text>
</comment>
<comment type="pathway">
    <text evidence="1">Phospholipid metabolism; phosphatidylethanolamine biosynthesis; phosphatidylethanolamine from CDP-diacylglycerol: step 2/2.</text>
</comment>
<comment type="subunit">
    <text evidence="1">Heterodimer of a large membrane-associated beta subunit and a small pyruvoyl-containing alpha subunit.</text>
</comment>
<comment type="subcellular location">
    <subcellularLocation>
        <location evidence="1">Cell membrane</location>
        <topology evidence="1">Peripheral membrane protein</topology>
    </subcellularLocation>
</comment>
<comment type="PTM">
    <text evidence="1">Is synthesized initially as an inactive proenzyme. Formation of the active enzyme involves a self-maturation process in which the active site pyruvoyl group is generated from an internal serine residue via an autocatalytic post-translational modification. Two non-identical subunits are generated from the proenzyme in this reaction, and the pyruvate is formed at the N-terminus of the alpha chain, which is derived from the carboxyl end of the proenzyme. The autoendoproteolytic cleavage occurs by a canonical serine protease mechanism, in which the side chain hydroxyl group of the serine supplies its oxygen atom to form the C-terminus of the beta chain, while the remainder of the serine residue undergoes an oxidative deamination to produce ammonia and the pyruvoyl prosthetic group on the alpha chain. During this reaction, the Ser that is part of the protease active site of the proenzyme becomes the pyruvoyl prosthetic group, which constitutes an essential element of the active site of the mature decarboxylase.</text>
</comment>
<comment type="similarity">
    <text evidence="1">Belongs to the phosphatidylserine decarboxylase family. PSD-B subfamily. Prokaryotic type I sub-subfamily.</text>
</comment>
<accession>A7ZV31</accession>
<organism>
    <name type="scientific">Escherichia coli O139:H28 (strain E24377A / ETEC)</name>
    <dbReference type="NCBI Taxonomy" id="331111"/>
    <lineage>
        <taxon>Bacteria</taxon>
        <taxon>Pseudomonadati</taxon>
        <taxon>Pseudomonadota</taxon>
        <taxon>Gammaproteobacteria</taxon>
        <taxon>Enterobacterales</taxon>
        <taxon>Enterobacteriaceae</taxon>
        <taxon>Escherichia</taxon>
    </lineage>
</organism>
<dbReference type="EC" id="4.1.1.65" evidence="1"/>
<dbReference type="EMBL" id="CP000800">
    <property type="protein sequence ID" value="ABV18945.1"/>
    <property type="molecule type" value="Genomic_DNA"/>
</dbReference>
<dbReference type="SMR" id="A7ZV31"/>
<dbReference type="KEGG" id="ecw:EcE24377A_4717"/>
<dbReference type="HOGENOM" id="CLU_029061_4_1_6"/>
<dbReference type="UniPathway" id="UPA00558">
    <property type="reaction ID" value="UER00616"/>
</dbReference>
<dbReference type="Proteomes" id="UP000001122">
    <property type="component" value="Chromosome"/>
</dbReference>
<dbReference type="GO" id="GO:0005886">
    <property type="term" value="C:plasma membrane"/>
    <property type="evidence" value="ECO:0007669"/>
    <property type="project" value="UniProtKB-SubCell"/>
</dbReference>
<dbReference type="GO" id="GO:0004609">
    <property type="term" value="F:phosphatidylserine decarboxylase activity"/>
    <property type="evidence" value="ECO:0007669"/>
    <property type="project" value="UniProtKB-UniRule"/>
</dbReference>
<dbReference type="GO" id="GO:0006646">
    <property type="term" value="P:phosphatidylethanolamine biosynthetic process"/>
    <property type="evidence" value="ECO:0007669"/>
    <property type="project" value="UniProtKB-UniRule"/>
</dbReference>
<dbReference type="HAMAP" id="MF_00662">
    <property type="entry name" value="PS_decarb_PSD_B_type1"/>
    <property type="match status" value="1"/>
</dbReference>
<dbReference type="InterPro" id="IPR003817">
    <property type="entry name" value="PS_Dcarbxylase"/>
</dbReference>
<dbReference type="InterPro" id="IPR033177">
    <property type="entry name" value="PSD-B"/>
</dbReference>
<dbReference type="InterPro" id="IPR033178">
    <property type="entry name" value="PSD_type1_pro"/>
</dbReference>
<dbReference type="NCBIfam" id="TIGR00163">
    <property type="entry name" value="PS_decarb"/>
    <property type="match status" value="1"/>
</dbReference>
<dbReference type="PANTHER" id="PTHR10067">
    <property type="entry name" value="PHOSPHATIDYLSERINE DECARBOXYLASE"/>
    <property type="match status" value="1"/>
</dbReference>
<dbReference type="PANTHER" id="PTHR10067:SF6">
    <property type="entry name" value="PHOSPHATIDYLSERINE DECARBOXYLASE PROENZYME, MITOCHONDRIAL"/>
    <property type="match status" value="1"/>
</dbReference>
<dbReference type="Pfam" id="PF02666">
    <property type="entry name" value="PS_Dcarbxylase"/>
    <property type="match status" value="1"/>
</dbReference>
<name>PSD_ECO24</name>
<reference key="1">
    <citation type="journal article" date="2008" name="J. Bacteriol.">
        <title>The pangenome structure of Escherichia coli: comparative genomic analysis of E. coli commensal and pathogenic isolates.</title>
        <authorList>
            <person name="Rasko D.A."/>
            <person name="Rosovitz M.J."/>
            <person name="Myers G.S.A."/>
            <person name="Mongodin E.F."/>
            <person name="Fricke W.F."/>
            <person name="Gajer P."/>
            <person name="Crabtree J."/>
            <person name="Sebaihia M."/>
            <person name="Thomson N.R."/>
            <person name="Chaudhuri R."/>
            <person name="Henderson I.R."/>
            <person name="Sperandio V."/>
            <person name="Ravel J."/>
        </authorList>
    </citation>
    <scope>NUCLEOTIDE SEQUENCE [LARGE SCALE GENOMIC DNA]</scope>
    <source>
        <strain>E24377A / ETEC</strain>
    </source>
</reference>